<sequence>MKQAFRVALGFLILWASVLHAEVRIEITQGVDSARPIGVVPFKWAGPGTPPEDIGKIVGADLRNSGKFNPIDVARMPQQPTTASEVTPAAWTALGIDAVVVGQVQPGADGGYLISYQLVDTSGSPGTVLAQNQYKVTKQWLRYSAHTASDEVFEKLTGIKGAFRTRIAYVVQTNGGKFPYELRVADYDGYNQFTVHRSPEPLMSPAWSPDGSKLAYVTFESGRSALVVQTLANGAIRQIASFPRHNGAPAFSPDGSRLAFALSKSGSLNLYVMNLGSGQITQITDGRSNNTEPTWFPDGQSLAYTSDQGGRPQIYKVSASGGASQRLTWEGSQNQDSEVSSDGKFLVMVSSNSGAQHIAKQDLGSGAVQVLTGTFLDETPSIAPNGTMVIYSSTQGMGSVLQLVSTDGRFKARLPATDGQVKFPAWSPYL</sequence>
<proteinExistence type="inferred from homology"/>
<organism>
    <name type="scientific">Serratia proteamaculans (strain 568)</name>
    <dbReference type="NCBI Taxonomy" id="399741"/>
    <lineage>
        <taxon>Bacteria</taxon>
        <taxon>Pseudomonadati</taxon>
        <taxon>Pseudomonadota</taxon>
        <taxon>Gammaproteobacteria</taxon>
        <taxon>Enterobacterales</taxon>
        <taxon>Yersiniaceae</taxon>
        <taxon>Serratia</taxon>
    </lineage>
</organism>
<keyword id="KW-0131">Cell cycle</keyword>
<keyword id="KW-0132">Cell division</keyword>
<keyword id="KW-0574">Periplasm</keyword>
<keyword id="KW-0732">Signal</keyword>
<feature type="signal peptide" evidence="1">
    <location>
        <begin position="1"/>
        <end position="21"/>
    </location>
</feature>
<feature type="chain" id="PRO_5000279151" description="Tol-Pal system protein TolB" evidence="1">
    <location>
        <begin position="22"/>
        <end position="430"/>
    </location>
</feature>
<name>TOLB_SERP5</name>
<gene>
    <name evidence="1" type="primary">tolB</name>
    <name type="ordered locus">Spro_1279</name>
</gene>
<evidence type="ECO:0000255" key="1">
    <source>
        <dbReference type="HAMAP-Rule" id="MF_00671"/>
    </source>
</evidence>
<reference key="1">
    <citation type="submission" date="2007-09" db="EMBL/GenBank/DDBJ databases">
        <title>Complete sequence of chromosome of Serratia proteamaculans 568.</title>
        <authorList>
            <consortium name="US DOE Joint Genome Institute"/>
            <person name="Copeland A."/>
            <person name="Lucas S."/>
            <person name="Lapidus A."/>
            <person name="Barry K."/>
            <person name="Glavina del Rio T."/>
            <person name="Dalin E."/>
            <person name="Tice H."/>
            <person name="Pitluck S."/>
            <person name="Chain P."/>
            <person name="Malfatti S."/>
            <person name="Shin M."/>
            <person name="Vergez L."/>
            <person name="Schmutz J."/>
            <person name="Larimer F."/>
            <person name="Land M."/>
            <person name="Hauser L."/>
            <person name="Kyrpides N."/>
            <person name="Kim E."/>
            <person name="Taghavi S."/>
            <person name="Newman L."/>
            <person name="Vangronsveld J."/>
            <person name="van der Lelie D."/>
            <person name="Richardson P."/>
        </authorList>
    </citation>
    <scope>NUCLEOTIDE SEQUENCE [LARGE SCALE GENOMIC DNA]</scope>
    <source>
        <strain>568</strain>
    </source>
</reference>
<comment type="function">
    <text evidence="1">Part of the Tol-Pal system, which plays a role in outer membrane invagination during cell division and is important for maintaining outer membrane integrity. TolB occupies a key intermediary position in the Tol-Pal system because it communicates directly with both membrane-embedded components, Pal in the outer membrane and TolA in the inner membrane.</text>
</comment>
<comment type="subunit">
    <text evidence="1">The Tol-Pal system is composed of five core proteins: the inner membrane proteins TolA, TolQ and TolR, the periplasmic protein TolB and the outer membrane protein Pal. They form a network linking the inner and outer membranes and the peptidoglycan layer.</text>
</comment>
<comment type="subcellular location">
    <subcellularLocation>
        <location evidence="1">Periplasm</location>
    </subcellularLocation>
</comment>
<comment type="similarity">
    <text evidence="1">Belongs to the TolB family.</text>
</comment>
<protein>
    <recommendedName>
        <fullName evidence="1">Tol-Pal system protein TolB</fullName>
    </recommendedName>
</protein>
<accession>A8GB93</accession>
<dbReference type="EMBL" id="CP000826">
    <property type="protein sequence ID" value="ABV40383.1"/>
    <property type="molecule type" value="Genomic_DNA"/>
</dbReference>
<dbReference type="SMR" id="A8GB93"/>
<dbReference type="STRING" id="399741.Spro_1279"/>
<dbReference type="KEGG" id="spe:Spro_1279"/>
<dbReference type="eggNOG" id="COG0823">
    <property type="taxonomic scope" value="Bacteria"/>
</dbReference>
<dbReference type="HOGENOM" id="CLU_047123_0_0_6"/>
<dbReference type="OrthoDB" id="9802240at2"/>
<dbReference type="GO" id="GO:0042597">
    <property type="term" value="C:periplasmic space"/>
    <property type="evidence" value="ECO:0007669"/>
    <property type="project" value="UniProtKB-SubCell"/>
</dbReference>
<dbReference type="GO" id="GO:0051301">
    <property type="term" value="P:cell division"/>
    <property type="evidence" value="ECO:0007669"/>
    <property type="project" value="UniProtKB-UniRule"/>
</dbReference>
<dbReference type="GO" id="GO:0017038">
    <property type="term" value="P:protein import"/>
    <property type="evidence" value="ECO:0007669"/>
    <property type="project" value="InterPro"/>
</dbReference>
<dbReference type="FunFam" id="2.120.10.30:FF:000022">
    <property type="entry name" value="Tol-Pal system protein TolB"/>
    <property type="match status" value="1"/>
</dbReference>
<dbReference type="Gene3D" id="2.120.10.30">
    <property type="entry name" value="TolB, C-terminal domain"/>
    <property type="match status" value="1"/>
</dbReference>
<dbReference type="Gene3D" id="3.40.50.10070">
    <property type="entry name" value="TolB, N-terminal domain"/>
    <property type="match status" value="1"/>
</dbReference>
<dbReference type="HAMAP" id="MF_00671">
    <property type="entry name" value="TolB"/>
    <property type="match status" value="1"/>
</dbReference>
<dbReference type="InterPro" id="IPR011042">
    <property type="entry name" value="6-blade_b-propeller_TolB-like"/>
</dbReference>
<dbReference type="InterPro" id="IPR011659">
    <property type="entry name" value="PD40"/>
</dbReference>
<dbReference type="InterPro" id="IPR014167">
    <property type="entry name" value="Tol-Pal_TolB"/>
</dbReference>
<dbReference type="InterPro" id="IPR007195">
    <property type="entry name" value="TolB_N"/>
</dbReference>
<dbReference type="NCBIfam" id="TIGR02800">
    <property type="entry name" value="propeller_TolB"/>
    <property type="match status" value="1"/>
</dbReference>
<dbReference type="PANTHER" id="PTHR36842:SF1">
    <property type="entry name" value="PROTEIN TOLB"/>
    <property type="match status" value="1"/>
</dbReference>
<dbReference type="PANTHER" id="PTHR36842">
    <property type="entry name" value="PROTEIN TOLB HOMOLOG"/>
    <property type="match status" value="1"/>
</dbReference>
<dbReference type="Pfam" id="PF07676">
    <property type="entry name" value="PD40"/>
    <property type="match status" value="4"/>
</dbReference>
<dbReference type="Pfam" id="PF04052">
    <property type="entry name" value="TolB_N"/>
    <property type="match status" value="1"/>
</dbReference>
<dbReference type="SUPFAM" id="SSF52964">
    <property type="entry name" value="TolB, N-terminal domain"/>
    <property type="match status" value="1"/>
</dbReference>
<dbReference type="SUPFAM" id="SSF69304">
    <property type="entry name" value="Tricorn protease N-terminal domain"/>
    <property type="match status" value="1"/>
</dbReference>